<accession>Q09780</accession>
<reference key="1">
    <citation type="journal article" date="1997" name="DNA Res.">
        <title>Identification of open reading frames in Schizosaccharomyces pombe cDNAs.</title>
        <authorList>
            <person name="Yoshioka S."/>
            <person name="Kato K."/>
            <person name="Nakai K."/>
            <person name="Okayama H."/>
            <person name="Nojima H."/>
        </authorList>
    </citation>
    <scope>NUCLEOTIDE SEQUENCE [LARGE SCALE MRNA]</scope>
    <source>
        <strain>PR745</strain>
    </source>
</reference>
<reference key="2">
    <citation type="journal article" date="2002" name="Nature">
        <title>The genome sequence of Schizosaccharomyces pombe.</title>
        <authorList>
            <person name="Wood V."/>
            <person name="Gwilliam R."/>
            <person name="Rajandream M.A."/>
            <person name="Lyne M.H."/>
            <person name="Lyne R."/>
            <person name="Stewart A."/>
            <person name="Sgouros J.G."/>
            <person name="Peat N."/>
            <person name="Hayles J."/>
            <person name="Baker S.G."/>
            <person name="Basham D."/>
            <person name="Bowman S."/>
            <person name="Brooks K."/>
            <person name="Brown D."/>
            <person name="Brown S."/>
            <person name="Chillingworth T."/>
            <person name="Churcher C.M."/>
            <person name="Collins M."/>
            <person name="Connor R."/>
            <person name="Cronin A."/>
            <person name="Davis P."/>
            <person name="Feltwell T."/>
            <person name="Fraser A."/>
            <person name="Gentles S."/>
            <person name="Goble A."/>
            <person name="Hamlin N."/>
            <person name="Harris D.E."/>
            <person name="Hidalgo J."/>
            <person name="Hodgson G."/>
            <person name="Holroyd S."/>
            <person name="Hornsby T."/>
            <person name="Howarth S."/>
            <person name="Huckle E.J."/>
            <person name="Hunt S."/>
            <person name="Jagels K."/>
            <person name="James K.D."/>
            <person name="Jones L."/>
            <person name="Jones M."/>
            <person name="Leather S."/>
            <person name="McDonald S."/>
            <person name="McLean J."/>
            <person name="Mooney P."/>
            <person name="Moule S."/>
            <person name="Mungall K.L."/>
            <person name="Murphy L.D."/>
            <person name="Niblett D."/>
            <person name="Odell C."/>
            <person name="Oliver K."/>
            <person name="O'Neil S."/>
            <person name="Pearson D."/>
            <person name="Quail M.A."/>
            <person name="Rabbinowitsch E."/>
            <person name="Rutherford K.M."/>
            <person name="Rutter S."/>
            <person name="Saunders D."/>
            <person name="Seeger K."/>
            <person name="Sharp S."/>
            <person name="Skelton J."/>
            <person name="Simmonds M.N."/>
            <person name="Squares R."/>
            <person name="Squares S."/>
            <person name="Stevens K."/>
            <person name="Taylor K."/>
            <person name="Taylor R.G."/>
            <person name="Tivey A."/>
            <person name="Walsh S.V."/>
            <person name="Warren T."/>
            <person name="Whitehead S."/>
            <person name="Woodward J.R."/>
            <person name="Volckaert G."/>
            <person name="Aert R."/>
            <person name="Robben J."/>
            <person name="Grymonprez B."/>
            <person name="Weltjens I."/>
            <person name="Vanstreels E."/>
            <person name="Rieger M."/>
            <person name="Schaefer M."/>
            <person name="Mueller-Auer S."/>
            <person name="Gabel C."/>
            <person name="Fuchs M."/>
            <person name="Duesterhoeft A."/>
            <person name="Fritzc C."/>
            <person name="Holzer E."/>
            <person name="Moestl D."/>
            <person name="Hilbert H."/>
            <person name="Borzym K."/>
            <person name="Langer I."/>
            <person name="Beck A."/>
            <person name="Lehrach H."/>
            <person name="Reinhardt R."/>
            <person name="Pohl T.M."/>
            <person name="Eger P."/>
            <person name="Zimmermann W."/>
            <person name="Wedler H."/>
            <person name="Wambutt R."/>
            <person name="Purnelle B."/>
            <person name="Goffeau A."/>
            <person name="Cadieu E."/>
            <person name="Dreano S."/>
            <person name="Gloux S."/>
            <person name="Lelaure V."/>
            <person name="Mottier S."/>
            <person name="Galibert F."/>
            <person name="Aves S.J."/>
            <person name="Xiang Z."/>
            <person name="Hunt C."/>
            <person name="Moore K."/>
            <person name="Hurst S.M."/>
            <person name="Lucas M."/>
            <person name="Rochet M."/>
            <person name="Gaillardin C."/>
            <person name="Tallada V.A."/>
            <person name="Garzon A."/>
            <person name="Thode G."/>
            <person name="Daga R.R."/>
            <person name="Cruzado L."/>
            <person name="Jimenez J."/>
            <person name="Sanchez M."/>
            <person name="del Rey F."/>
            <person name="Benito J."/>
            <person name="Dominguez A."/>
            <person name="Revuelta J.L."/>
            <person name="Moreno S."/>
            <person name="Armstrong J."/>
            <person name="Forsburg S.L."/>
            <person name="Cerutti L."/>
            <person name="Lowe T."/>
            <person name="McCombie W.R."/>
            <person name="Paulsen I."/>
            <person name="Potashkin J."/>
            <person name="Shpakovski G.V."/>
            <person name="Ussery D."/>
            <person name="Barrell B.G."/>
            <person name="Nurse P."/>
        </authorList>
    </citation>
    <scope>NUCLEOTIDE SEQUENCE [LARGE SCALE GENOMIC DNA]</scope>
    <source>
        <strain>972 / ATCC 24843</strain>
    </source>
</reference>
<reference key="3">
    <citation type="journal article" date="2006" name="Nat. Biotechnol.">
        <title>ORFeome cloning and global analysis of protein localization in the fission yeast Schizosaccharomyces pombe.</title>
        <authorList>
            <person name="Matsuyama A."/>
            <person name="Arai R."/>
            <person name="Yashiroda Y."/>
            <person name="Shirai A."/>
            <person name="Kamata A."/>
            <person name="Sekido S."/>
            <person name="Kobayashi Y."/>
            <person name="Hashimoto A."/>
            <person name="Hamamoto M."/>
            <person name="Hiraoka Y."/>
            <person name="Horinouchi S."/>
            <person name="Yoshida M."/>
        </authorList>
    </citation>
    <scope>SUBCELLULAR LOCATION [LARGE SCALE ANALYSIS]</scope>
</reference>
<organism>
    <name type="scientific">Schizosaccharomyces pombe (strain 972 / ATCC 24843)</name>
    <name type="common">Fission yeast</name>
    <dbReference type="NCBI Taxonomy" id="284812"/>
    <lineage>
        <taxon>Eukaryota</taxon>
        <taxon>Fungi</taxon>
        <taxon>Dikarya</taxon>
        <taxon>Ascomycota</taxon>
        <taxon>Taphrinomycotina</taxon>
        <taxon>Schizosaccharomycetes</taxon>
        <taxon>Schizosaccharomycetales</taxon>
        <taxon>Schizosaccharomycetaceae</taxon>
        <taxon>Schizosaccharomyces</taxon>
    </lineage>
</organism>
<feature type="chain" id="PRO_0000156661" description="Mevalonate kinase">
    <location>
        <begin position="1"/>
        <end position="404"/>
    </location>
</feature>
<feature type="active site" description="Proton acceptor" evidence="3">
    <location>
        <position position="195"/>
    </location>
</feature>
<feature type="binding site" evidence="2">
    <location>
        <position position="12"/>
    </location>
    <ligand>
        <name>ATP</name>
        <dbReference type="ChEBI" id="CHEBI:30616"/>
    </ligand>
</feature>
<feature type="binding site" evidence="2">
    <location>
        <position position="130"/>
    </location>
    <ligand>
        <name>ATP</name>
        <dbReference type="ChEBI" id="CHEBI:30616"/>
    </ligand>
</feature>
<feature type="binding site" evidence="2">
    <location>
        <begin position="135"/>
        <end position="141"/>
    </location>
    <ligand>
        <name>ATP</name>
        <dbReference type="ChEBI" id="CHEBI:30616"/>
    </ligand>
</feature>
<feature type="binding site" evidence="2">
    <location>
        <position position="141"/>
    </location>
    <ligand>
        <name>Mg(2+)</name>
        <dbReference type="ChEBI" id="CHEBI:18420"/>
    </ligand>
</feature>
<feature type="binding site" evidence="2">
    <location>
        <position position="184"/>
    </location>
    <ligand>
        <name>Mg(2+)</name>
        <dbReference type="ChEBI" id="CHEBI:18420"/>
    </ligand>
</feature>
<proteinExistence type="evidence at transcript level"/>
<sequence length="404" mass="43407">MSKSLIVSSPGKTILFGEHAVVYGATALAAAVSLRSYCKLQTTNNNEIVIVMSDIGTERRWNLQSLPWQHVTVENVQHPASSPNLDLLQGLGELLKNEENGLIHSAMLCTLYLFTSLSSPSQGCTLTISSQVPLGAGLGSSATISVVVATSLLLAFGNIEPPSSNSLQNNKALALIEAWSFLGECCIHGTPSGIDNAVATNGGLIAFRKATAHQSAMKEFLKPKDTLSVMITDTKQPKSTKKLVQGVFELKERLPTVIDSIIDAIDGISKSAVLALTSESDKNSSAKKLGEFIVLNQKLLECLGVSHYSIDRVLQATKSIGWTKLTGAGGGGCTITLLTPECKEEEFKLCKESLLAHKNSIYDVQLGGPGVSVVTDSDSFFPQYESDFDFKKLNLLSKFNKYYI</sequence>
<comment type="function">
    <text evidence="1 5">Mevalonate kinase; part of the second module of ergosterol biosynthesis pathway that includes the middle steps of the pathway (By similarity). Erg12 converts mevalonate into 5-phosphomevalonate (By similarity). The second module is carried out in the vacuole and involves the formation of farnesyl diphosphate, which is also an important intermediate in the biosynthesis of ubiquinone, dolichol, heme and prenylated proteins. Activity by the mevalonate kinase erg12 first converts mevalonate into 5-phosphomevalonate. 5-phosphomevalonate is then further converted to 5-diphosphomevalonate by the phosphomevalonate kinase erg8. The diphosphomevalonate decarboxylase mvd1 then produces isopentenyl diphosphate. The isopentenyl-diphosphate delta-isomerase idi1 then catalyzes the 1,3-allylic rearrangement of the homoallylic substrate isopentenyl (IPP) to its highly electrophilic allylic isomer, dimethylallyl diphosphate (DMAPP). Finally the farnesyl diphosphate synthase fps1 catalyzes the sequential condensation of isopentenyl pyrophosphate with dimethylallyl pyrophosphate, and then with the resultant geranylpyrophosphate to the ultimate product farnesyl pyrophosphate (Probable).</text>
</comment>
<comment type="catalytic activity">
    <reaction evidence="1">
        <text>(R)-mevalonate + ATP = (R)-5-phosphomevalonate + ADP + H(+)</text>
        <dbReference type="Rhea" id="RHEA:17065"/>
        <dbReference type="ChEBI" id="CHEBI:15378"/>
        <dbReference type="ChEBI" id="CHEBI:30616"/>
        <dbReference type="ChEBI" id="CHEBI:36464"/>
        <dbReference type="ChEBI" id="CHEBI:58146"/>
        <dbReference type="ChEBI" id="CHEBI:456216"/>
        <dbReference type="EC" id="2.7.1.36"/>
    </reaction>
    <physiologicalReaction direction="left-to-right" evidence="1">
        <dbReference type="Rhea" id="RHEA:17066"/>
    </physiologicalReaction>
</comment>
<comment type="cofactor">
    <cofactor evidence="2">
        <name>Mg(2+)</name>
        <dbReference type="ChEBI" id="CHEBI:18420"/>
    </cofactor>
</comment>
<comment type="activity regulation">
    <text evidence="1">Farnesyl pyrophosphate and geranyl pyrophosphate inhibit mevalonate kinase by binding competitively at the ATP-binding site.</text>
</comment>
<comment type="pathway">
    <text evidence="1">Isoprenoid biosynthesis; isopentenyl diphosphate biosynthesis via mevalonate pathway; isopentenyl diphosphate from (R)-mevalonate: step 1/3.</text>
</comment>
<comment type="subunit">
    <text evidence="2">Homodimer.</text>
</comment>
<comment type="subcellular location">
    <subcellularLocation>
        <location evidence="4">Cytoplasm</location>
    </subcellularLocation>
    <subcellularLocation>
        <location evidence="4">Nucleus</location>
    </subcellularLocation>
</comment>
<comment type="similarity">
    <text evidence="5">Belongs to the GHMP kinase family. Mevalonate kinase subfamily.</text>
</comment>
<keyword id="KW-0067">ATP-binding</keyword>
<keyword id="KW-0963">Cytoplasm</keyword>
<keyword id="KW-0418">Kinase</keyword>
<keyword id="KW-0444">Lipid biosynthesis</keyword>
<keyword id="KW-0443">Lipid metabolism</keyword>
<keyword id="KW-0460">Magnesium</keyword>
<keyword id="KW-0479">Metal-binding</keyword>
<keyword id="KW-0547">Nucleotide-binding</keyword>
<keyword id="KW-0539">Nucleus</keyword>
<keyword id="KW-1185">Reference proteome</keyword>
<keyword id="KW-0752">Steroid biosynthesis</keyword>
<keyword id="KW-0753">Steroid metabolism</keyword>
<keyword id="KW-0756">Sterol biosynthesis</keyword>
<keyword id="KW-1207">Sterol metabolism</keyword>
<keyword id="KW-0808">Transferase</keyword>
<evidence type="ECO:0000250" key="1">
    <source>
        <dbReference type="UniProtKB" id="P07277"/>
    </source>
</evidence>
<evidence type="ECO:0000250" key="2">
    <source>
        <dbReference type="UniProtKB" id="P17256"/>
    </source>
</evidence>
<evidence type="ECO:0000250" key="3">
    <source>
        <dbReference type="UniProtKB" id="Q03426"/>
    </source>
</evidence>
<evidence type="ECO:0000269" key="4">
    <source>
    </source>
</evidence>
<evidence type="ECO:0000305" key="5"/>
<gene>
    <name type="primary">erg12</name>
    <name type="ORF">SPAC13G6.11c</name>
</gene>
<dbReference type="EC" id="2.7.1.36" evidence="1"/>
<dbReference type="EMBL" id="AB000541">
    <property type="protein sequence ID" value="BAA25169.1"/>
    <property type="molecule type" value="mRNA"/>
</dbReference>
<dbReference type="EMBL" id="CU329670">
    <property type="protein sequence ID" value="CAA91104.1"/>
    <property type="molecule type" value="Genomic_DNA"/>
</dbReference>
<dbReference type="PIR" id="S62440">
    <property type="entry name" value="S62440"/>
</dbReference>
<dbReference type="RefSeq" id="NP_592837.1">
    <property type="nucleotide sequence ID" value="NM_001018238.2"/>
</dbReference>
<dbReference type="SMR" id="Q09780"/>
<dbReference type="BioGRID" id="279265">
    <property type="interactions" value="2"/>
</dbReference>
<dbReference type="FunCoup" id="Q09780">
    <property type="interactions" value="433"/>
</dbReference>
<dbReference type="STRING" id="284812.Q09780"/>
<dbReference type="PaxDb" id="4896-SPAC13G6.11c.1"/>
<dbReference type="EnsemblFungi" id="SPAC13G6.11c.1">
    <property type="protein sequence ID" value="SPAC13G6.11c.1:pep"/>
    <property type="gene ID" value="SPAC13G6.11c"/>
</dbReference>
<dbReference type="GeneID" id="2542818"/>
<dbReference type="KEGG" id="spo:2542818"/>
<dbReference type="PomBase" id="SPAC13G6.11c">
    <property type="gene designation" value="erg12"/>
</dbReference>
<dbReference type="VEuPathDB" id="FungiDB:SPAC13G6.11c"/>
<dbReference type="eggNOG" id="KOG1511">
    <property type="taxonomic scope" value="Eukaryota"/>
</dbReference>
<dbReference type="HOGENOM" id="CLU_017814_0_1_1"/>
<dbReference type="InParanoid" id="Q09780"/>
<dbReference type="OMA" id="LMDFNHG"/>
<dbReference type="PhylomeDB" id="Q09780"/>
<dbReference type="Reactome" id="R-SPO-191273">
    <property type="pathway name" value="Cholesterol biosynthesis"/>
</dbReference>
<dbReference type="UniPathway" id="UPA00057">
    <property type="reaction ID" value="UER00098"/>
</dbReference>
<dbReference type="PRO" id="PR:Q09780"/>
<dbReference type="Proteomes" id="UP000002485">
    <property type="component" value="Chromosome I"/>
</dbReference>
<dbReference type="GO" id="GO:0005829">
    <property type="term" value="C:cytosol"/>
    <property type="evidence" value="ECO:0007005"/>
    <property type="project" value="PomBase"/>
</dbReference>
<dbReference type="GO" id="GO:0005634">
    <property type="term" value="C:nucleus"/>
    <property type="evidence" value="ECO:0007005"/>
    <property type="project" value="PomBase"/>
</dbReference>
<dbReference type="GO" id="GO:0005524">
    <property type="term" value="F:ATP binding"/>
    <property type="evidence" value="ECO:0000250"/>
    <property type="project" value="UniProtKB"/>
</dbReference>
<dbReference type="GO" id="GO:0000287">
    <property type="term" value="F:magnesium ion binding"/>
    <property type="evidence" value="ECO:0000250"/>
    <property type="project" value="UniProtKB"/>
</dbReference>
<dbReference type="GO" id="GO:0004496">
    <property type="term" value="F:mevalonate kinase activity"/>
    <property type="evidence" value="ECO:0000250"/>
    <property type="project" value="UniProtKB"/>
</dbReference>
<dbReference type="GO" id="GO:0006696">
    <property type="term" value="P:ergosterol biosynthetic process"/>
    <property type="evidence" value="ECO:0000318"/>
    <property type="project" value="GO_Central"/>
</dbReference>
<dbReference type="GO" id="GO:0010142">
    <property type="term" value="P:farnesyl diphosphate biosynthetic process, mevalonate pathway"/>
    <property type="evidence" value="ECO:0000305"/>
    <property type="project" value="PomBase"/>
</dbReference>
<dbReference type="GO" id="GO:0019287">
    <property type="term" value="P:isopentenyl diphosphate biosynthetic process, mevalonate pathway"/>
    <property type="evidence" value="ECO:0000318"/>
    <property type="project" value="GO_Central"/>
</dbReference>
<dbReference type="Gene3D" id="3.30.230.10">
    <property type="match status" value="1"/>
</dbReference>
<dbReference type="Gene3D" id="3.30.70.890">
    <property type="entry name" value="GHMP kinase, C-terminal domain"/>
    <property type="match status" value="1"/>
</dbReference>
<dbReference type="InterPro" id="IPR013750">
    <property type="entry name" value="GHMP_kinase_C_dom"/>
</dbReference>
<dbReference type="InterPro" id="IPR036554">
    <property type="entry name" value="GHMP_kinase_C_sf"/>
</dbReference>
<dbReference type="InterPro" id="IPR006204">
    <property type="entry name" value="GHMP_kinase_N_dom"/>
</dbReference>
<dbReference type="InterPro" id="IPR006203">
    <property type="entry name" value="GHMP_knse_ATP-bd_CS"/>
</dbReference>
<dbReference type="InterPro" id="IPR006205">
    <property type="entry name" value="Mev_gal_kin"/>
</dbReference>
<dbReference type="InterPro" id="IPR020568">
    <property type="entry name" value="Ribosomal_Su5_D2-typ_SF"/>
</dbReference>
<dbReference type="InterPro" id="IPR014721">
    <property type="entry name" value="Ribsml_uS5_D2-typ_fold_subgr"/>
</dbReference>
<dbReference type="NCBIfam" id="TIGR00549">
    <property type="entry name" value="mevalon_kin"/>
    <property type="match status" value="1"/>
</dbReference>
<dbReference type="PANTHER" id="PTHR43290">
    <property type="entry name" value="MEVALONATE KINASE"/>
    <property type="match status" value="1"/>
</dbReference>
<dbReference type="PANTHER" id="PTHR43290:SF2">
    <property type="entry name" value="MEVALONATE KINASE"/>
    <property type="match status" value="1"/>
</dbReference>
<dbReference type="Pfam" id="PF08544">
    <property type="entry name" value="GHMP_kinases_C"/>
    <property type="match status" value="1"/>
</dbReference>
<dbReference type="Pfam" id="PF00288">
    <property type="entry name" value="GHMP_kinases_N"/>
    <property type="match status" value="1"/>
</dbReference>
<dbReference type="PRINTS" id="PR00959">
    <property type="entry name" value="MEVGALKINASE"/>
</dbReference>
<dbReference type="SUPFAM" id="SSF55060">
    <property type="entry name" value="GHMP Kinase, C-terminal domain"/>
    <property type="match status" value="1"/>
</dbReference>
<dbReference type="SUPFAM" id="SSF54211">
    <property type="entry name" value="Ribosomal protein S5 domain 2-like"/>
    <property type="match status" value="1"/>
</dbReference>
<dbReference type="PROSITE" id="PS00627">
    <property type="entry name" value="GHMP_KINASES_ATP"/>
    <property type="match status" value="1"/>
</dbReference>
<protein>
    <recommendedName>
        <fullName evidence="1">Mevalonate kinase</fullName>
        <shortName evidence="1">MK</shortName>
        <ecNumber evidence="1">2.7.1.36</ecNumber>
    </recommendedName>
</protein>
<name>ERG12_SCHPO</name>